<evidence type="ECO:0000255" key="1">
    <source>
        <dbReference type="HAMAP-Rule" id="MF_01302"/>
    </source>
</evidence>
<evidence type="ECO:0000305" key="2"/>
<organism>
    <name type="scientific">Acinetobacter baumannii (strain AB307-0294)</name>
    <dbReference type="NCBI Taxonomy" id="557600"/>
    <lineage>
        <taxon>Bacteria</taxon>
        <taxon>Pseudomonadati</taxon>
        <taxon>Pseudomonadota</taxon>
        <taxon>Gammaproteobacteria</taxon>
        <taxon>Moraxellales</taxon>
        <taxon>Moraxellaceae</taxon>
        <taxon>Acinetobacter</taxon>
        <taxon>Acinetobacter calcoaceticus/baumannii complex</taxon>
    </lineage>
</organism>
<accession>B7GW16</accession>
<proteinExistence type="inferred from homology"/>
<dbReference type="EMBL" id="CP001172">
    <property type="protein sequence ID" value="ACJ56921.1"/>
    <property type="molecule type" value="Genomic_DNA"/>
</dbReference>
<dbReference type="RefSeq" id="WP_000062616.1">
    <property type="nucleotide sequence ID" value="NZ_CP001172.1"/>
</dbReference>
<dbReference type="SMR" id="B7GW16"/>
<dbReference type="GeneID" id="92895303"/>
<dbReference type="HOGENOM" id="CLU_098428_0_0_6"/>
<dbReference type="Proteomes" id="UP000006924">
    <property type="component" value="Chromosome"/>
</dbReference>
<dbReference type="GO" id="GO:1990904">
    <property type="term" value="C:ribonucleoprotein complex"/>
    <property type="evidence" value="ECO:0007669"/>
    <property type="project" value="UniProtKB-KW"/>
</dbReference>
<dbReference type="GO" id="GO:0005840">
    <property type="term" value="C:ribosome"/>
    <property type="evidence" value="ECO:0007669"/>
    <property type="project" value="UniProtKB-KW"/>
</dbReference>
<dbReference type="GO" id="GO:0019843">
    <property type="term" value="F:rRNA binding"/>
    <property type="evidence" value="ECO:0007669"/>
    <property type="project" value="UniProtKB-UniRule"/>
</dbReference>
<dbReference type="GO" id="GO:0003735">
    <property type="term" value="F:structural constituent of ribosome"/>
    <property type="evidence" value="ECO:0007669"/>
    <property type="project" value="InterPro"/>
</dbReference>
<dbReference type="GO" id="GO:0006412">
    <property type="term" value="P:translation"/>
    <property type="evidence" value="ECO:0007669"/>
    <property type="project" value="UniProtKB-UniRule"/>
</dbReference>
<dbReference type="FunFam" id="3.30.1370.30:FF:000002">
    <property type="entry name" value="30S ribosomal protein S8"/>
    <property type="match status" value="1"/>
</dbReference>
<dbReference type="FunFam" id="3.30.1490.10:FF:000001">
    <property type="entry name" value="30S ribosomal protein S8"/>
    <property type="match status" value="1"/>
</dbReference>
<dbReference type="Gene3D" id="3.30.1370.30">
    <property type="match status" value="1"/>
</dbReference>
<dbReference type="Gene3D" id="3.30.1490.10">
    <property type="match status" value="1"/>
</dbReference>
<dbReference type="HAMAP" id="MF_01302_B">
    <property type="entry name" value="Ribosomal_uS8_B"/>
    <property type="match status" value="1"/>
</dbReference>
<dbReference type="InterPro" id="IPR000630">
    <property type="entry name" value="Ribosomal_uS8"/>
</dbReference>
<dbReference type="InterPro" id="IPR047863">
    <property type="entry name" value="Ribosomal_uS8_CS"/>
</dbReference>
<dbReference type="InterPro" id="IPR035987">
    <property type="entry name" value="Ribosomal_uS8_sf"/>
</dbReference>
<dbReference type="NCBIfam" id="NF001109">
    <property type="entry name" value="PRK00136.1"/>
    <property type="match status" value="1"/>
</dbReference>
<dbReference type="PANTHER" id="PTHR11758">
    <property type="entry name" value="40S RIBOSOMAL PROTEIN S15A"/>
    <property type="match status" value="1"/>
</dbReference>
<dbReference type="Pfam" id="PF00410">
    <property type="entry name" value="Ribosomal_S8"/>
    <property type="match status" value="1"/>
</dbReference>
<dbReference type="SUPFAM" id="SSF56047">
    <property type="entry name" value="Ribosomal protein S8"/>
    <property type="match status" value="1"/>
</dbReference>
<dbReference type="PROSITE" id="PS00053">
    <property type="entry name" value="RIBOSOMAL_S8"/>
    <property type="match status" value="1"/>
</dbReference>
<reference key="1">
    <citation type="journal article" date="2008" name="J. Bacteriol.">
        <title>Comparative genome sequence analysis of multidrug-resistant Acinetobacter baumannii.</title>
        <authorList>
            <person name="Adams M.D."/>
            <person name="Goglin K."/>
            <person name="Molyneaux N."/>
            <person name="Hujer K.M."/>
            <person name="Lavender H."/>
            <person name="Jamison J.J."/>
            <person name="MacDonald I.J."/>
            <person name="Martin K.M."/>
            <person name="Russo T."/>
            <person name="Campagnari A.A."/>
            <person name="Hujer A.M."/>
            <person name="Bonomo R.A."/>
            <person name="Gill S.R."/>
        </authorList>
    </citation>
    <scope>NUCLEOTIDE SEQUENCE [LARGE SCALE GENOMIC DNA]</scope>
    <source>
        <strain>AB307-0294</strain>
    </source>
</reference>
<feature type="chain" id="PRO_1000140495" description="Small ribosomal subunit protein uS8">
    <location>
        <begin position="1"/>
        <end position="131"/>
    </location>
</feature>
<comment type="function">
    <text evidence="1">One of the primary rRNA binding proteins, it binds directly to 16S rRNA central domain where it helps coordinate assembly of the platform of the 30S subunit.</text>
</comment>
<comment type="subunit">
    <text evidence="1">Part of the 30S ribosomal subunit. Contacts proteins S5 and S12.</text>
</comment>
<comment type="similarity">
    <text evidence="1">Belongs to the universal ribosomal protein uS8 family.</text>
</comment>
<sequence>MSMQDTVADMLTRVRNAQMAKKQTVSMPSSKLKVAIANVLQQEGYISNVEVAQEETKSTLTITLKYFEGKPVIEMVKRVSRPGLRQYRGKDKLPSVKQGLGIAIVSTSKGIMTDRAARAAGIGGEVIAFVS</sequence>
<keyword id="KW-0687">Ribonucleoprotein</keyword>
<keyword id="KW-0689">Ribosomal protein</keyword>
<keyword id="KW-0694">RNA-binding</keyword>
<keyword id="KW-0699">rRNA-binding</keyword>
<name>RS8_ACIB3</name>
<protein>
    <recommendedName>
        <fullName evidence="1">Small ribosomal subunit protein uS8</fullName>
    </recommendedName>
    <alternativeName>
        <fullName evidence="2">30S ribosomal protein S8</fullName>
    </alternativeName>
</protein>
<gene>
    <name evidence="1" type="primary">rpsH</name>
    <name type="ordered locus">ABBFA_000446</name>
</gene>